<reference key="1">
    <citation type="journal article" date="2002" name="Proc. Natl. Acad. Sci. U.S.A.">
        <title>The complete genome sequence of Chlorobium tepidum TLS, a photosynthetic, anaerobic, green-sulfur bacterium.</title>
        <authorList>
            <person name="Eisen J.A."/>
            <person name="Nelson K.E."/>
            <person name="Paulsen I.T."/>
            <person name="Heidelberg J.F."/>
            <person name="Wu M."/>
            <person name="Dodson R.J."/>
            <person name="DeBoy R.T."/>
            <person name="Gwinn M.L."/>
            <person name="Nelson W.C."/>
            <person name="Haft D.H."/>
            <person name="Hickey E.K."/>
            <person name="Peterson J.D."/>
            <person name="Durkin A.S."/>
            <person name="Kolonay J.F."/>
            <person name="Yang F."/>
            <person name="Holt I.E."/>
            <person name="Umayam L.A."/>
            <person name="Mason T.M."/>
            <person name="Brenner M."/>
            <person name="Shea T.P."/>
            <person name="Parksey D.S."/>
            <person name="Nierman W.C."/>
            <person name="Feldblyum T.V."/>
            <person name="Hansen C.L."/>
            <person name="Craven M.B."/>
            <person name="Radune D."/>
            <person name="Vamathevan J.J."/>
            <person name="Khouri H.M."/>
            <person name="White O."/>
            <person name="Gruber T.M."/>
            <person name="Ketchum K.A."/>
            <person name="Venter J.C."/>
            <person name="Tettelin H."/>
            <person name="Bryant D.A."/>
            <person name="Fraser C.M."/>
        </authorList>
    </citation>
    <scope>NUCLEOTIDE SEQUENCE [LARGE SCALE GENOMIC DNA]</scope>
    <source>
        <strain>ATCC 49652 / DSM 12025 / NBRC 103806 / TLS</strain>
    </source>
</reference>
<name>GLMS_CHLTE</name>
<feature type="initiator methionine" description="Removed" evidence="1">
    <location>
        <position position="1"/>
    </location>
</feature>
<feature type="chain" id="PRO_0000135320" description="Glutamine--fructose-6-phosphate aminotransferase [isomerizing]">
    <location>
        <begin position="2"/>
        <end position="614"/>
    </location>
</feature>
<feature type="domain" description="Glutamine amidotransferase type-2" evidence="1">
    <location>
        <begin position="2"/>
        <end position="223"/>
    </location>
</feature>
<feature type="domain" description="SIS 1" evidence="1">
    <location>
        <begin position="292"/>
        <end position="431"/>
    </location>
</feature>
<feature type="domain" description="SIS 2" evidence="1">
    <location>
        <begin position="463"/>
        <end position="604"/>
    </location>
</feature>
<feature type="active site" description="Nucleophile; for GATase activity" evidence="1">
    <location>
        <position position="2"/>
    </location>
</feature>
<feature type="active site" description="For Fru-6P isomerization activity" evidence="1">
    <location>
        <position position="609"/>
    </location>
</feature>
<protein>
    <recommendedName>
        <fullName evidence="1">Glutamine--fructose-6-phosphate aminotransferase [isomerizing]</fullName>
        <ecNumber evidence="1">2.6.1.16</ecNumber>
    </recommendedName>
    <alternativeName>
        <fullName evidence="1">D-fructose-6-phosphate amidotransferase</fullName>
    </alternativeName>
    <alternativeName>
        <fullName evidence="1">GFAT</fullName>
    </alternativeName>
    <alternativeName>
        <fullName evidence="1">Glucosamine-6-phosphate synthase</fullName>
    </alternativeName>
    <alternativeName>
        <fullName evidence="1">Hexosephosphate aminotransferase</fullName>
    </alternativeName>
    <alternativeName>
        <fullName evidence="1">L-glutamine--D-fructose-6-phosphate amidotransferase</fullName>
    </alternativeName>
</protein>
<proteinExistence type="inferred from homology"/>
<comment type="function">
    <text evidence="1">Catalyzes the first step in hexosamine metabolism, converting fructose-6P into glucosamine-6P using glutamine as a nitrogen source.</text>
</comment>
<comment type="catalytic activity">
    <reaction evidence="1">
        <text>D-fructose 6-phosphate + L-glutamine = D-glucosamine 6-phosphate + L-glutamate</text>
        <dbReference type="Rhea" id="RHEA:13237"/>
        <dbReference type="ChEBI" id="CHEBI:29985"/>
        <dbReference type="ChEBI" id="CHEBI:58359"/>
        <dbReference type="ChEBI" id="CHEBI:58725"/>
        <dbReference type="ChEBI" id="CHEBI:61527"/>
        <dbReference type="EC" id="2.6.1.16"/>
    </reaction>
</comment>
<comment type="subunit">
    <text evidence="1">Homodimer.</text>
</comment>
<comment type="subcellular location">
    <subcellularLocation>
        <location evidence="1">Cytoplasm</location>
    </subcellularLocation>
</comment>
<accession>Q8KG38</accession>
<sequence length="614" mass="67577">MCGIIGYIGRREAAPLLLNGLKRLEYRGYDSAGMAVLNGSMKMLKKKGSVSNLEELLNVSGTVMLGATVGIAHTRWATHGDPSDRNAHPHMNVSGDIALIHNGIIENYSALKQELMGEGYVFESDTDSEVLVHLIDRIWKNDSALGLEGAVRQALRHVEGAYGICVVSSREPDKIVVARKGSPLVIGLGDGEFFIASDAAPIVEHTNKVVYLSDGEMAVVTRDSYTVKTIENVEQQKRVTELDFSLEKIEKGGFEHFMLKEIFEQPEVMRDVMRGRVRVEEGRVHLGGIHDYLDRLKQAKRIMICACGTSWHAGLIGEYLIEEFARIPVEVDYASEFRYRNPIVSSDDVVIVISQSGETADTLAALRLAKEKGAMVMGICNVVGSTIPRETLCGMYTHAGPEVGVASTKAFTAQVIVLFMLAMALSKGRTISQEEIKLNLRELAEVPDKVAWILEQNDAIKEIAVKLKDARNALYLGRGYNFPVALEGALKLKEISYIHAEGYPAAEMKHGPIALIDEDMPVIVIATRDNTYAKILSNIEEVRSRKGRVIAIASEGDREIERLTEDVIYIPQASAAVLPLLTVIPLQLLSYHVATLRGCNVDRPRNLAKSVTVE</sequence>
<evidence type="ECO:0000255" key="1">
    <source>
        <dbReference type="HAMAP-Rule" id="MF_00164"/>
    </source>
</evidence>
<keyword id="KW-0032">Aminotransferase</keyword>
<keyword id="KW-0963">Cytoplasm</keyword>
<keyword id="KW-0315">Glutamine amidotransferase</keyword>
<keyword id="KW-1185">Reference proteome</keyword>
<keyword id="KW-0677">Repeat</keyword>
<keyword id="KW-0808">Transferase</keyword>
<organism>
    <name type="scientific">Chlorobaculum tepidum (strain ATCC 49652 / DSM 12025 / NBRC 103806 / TLS)</name>
    <name type="common">Chlorobium tepidum</name>
    <dbReference type="NCBI Taxonomy" id="194439"/>
    <lineage>
        <taxon>Bacteria</taxon>
        <taxon>Pseudomonadati</taxon>
        <taxon>Chlorobiota</taxon>
        <taxon>Chlorobiia</taxon>
        <taxon>Chlorobiales</taxon>
        <taxon>Chlorobiaceae</taxon>
        <taxon>Chlorobaculum</taxon>
    </lineage>
</organism>
<gene>
    <name evidence="1" type="primary">glmS</name>
    <name type="ordered locus">CT0130</name>
</gene>
<dbReference type="EC" id="2.6.1.16" evidence="1"/>
<dbReference type="EMBL" id="AE006470">
    <property type="protein sequence ID" value="AAM71378.1"/>
    <property type="molecule type" value="Genomic_DNA"/>
</dbReference>
<dbReference type="RefSeq" id="NP_661036.1">
    <property type="nucleotide sequence ID" value="NC_002932.3"/>
</dbReference>
<dbReference type="RefSeq" id="WP_010931824.1">
    <property type="nucleotide sequence ID" value="NC_002932.3"/>
</dbReference>
<dbReference type="SMR" id="Q8KG38"/>
<dbReference type="STRING" id="194439.CT0130"/>
<dbReference type="EnsemblBacteria" id="AAM71378">
    <property type="protein sequence ID" value="AAM71378"/>
    <property type="gene ID" value="CT0130"/>
</dbReference>
<dbReference type="KEGG" id="cte:CT0130"/>
<dbReference type="PATRIC" id="fig|194439.7.peg.127"/>
<dbReference type="eggNOG" id="COG0449">
    <property type="taxonomic scope" value="Bacteria"/>
</dbReference>
<dbReference type="HOGENOM" id="CLU_012520_5_2_10"/>
<dbReference type="OrthoDB" id="106547at2"/>
<dbReference type="Proteomes" id="UP000001007">
    <property type="component" value="Chromosome"/>
</dbReference>
<dbReference type="GO" id="GO:0005829">
    <property type="term" value="C:cytosol"/>
    <property type="evidence" value="ECO:0007669"/>
    <property type="project" value="TreeGrafter"/>
</dbReference>
<dbReference type="GO" id="GO:0097367">
    <property type="term" value="F:carbohydrate derivative binding"/>
    <property type="evidence" value="ECO:0007669"/>
    <property type="project" value="InterPro"/>
</dbReference>
<dbReference type="GO" id="GO:0004360">
    <property type="term" value="F:glutamine-fructose-6-phosphate transaminase (isomerizing) activity"/>
    <property type="evidence" value="ECO:0007669"/>
    <property type="project" value="UniProtKB-UniRule"/>
</dbReference>
<dbReference type="GO" id="GO:0005975">
    <property type="term" value="P:carbohydrate metabolic process"/>
    <property type="evidence" value="ECO:0007669"/>
    <property type="project" value="UniProtKB-UniRule"/>
</dbReference>
<dbReference type="GO" id="GO:0006002">
    <property type="term" value="P:fructose 6-phosphate metabolic process"/>
    <property type="evidence" value="ECO:0007669"/>
    <property type="project" value="TreeGrafter"/>
</dbReference>
<dbReference type="GO" id="GO:0006487">
    <property type="term" value="P:protein N-linked glycosylation"/>
    <property type="evidence" value="ECO:0007669"/>
    <property type="project" value="TreeGrafter"/>
</dbReference>
<dbReference type="GO" id="GO:0006047">
    <property type="term" value="P:UDP-N-acetylglucosamine metabolic process"/>
    <property type="evidence" value="ECO:0007669"/>
    <property type="project" value="TreeGrafter"/>
</dbReference>
<dbReference type="CDD" id="cd00714">
    <property type="entry name" value="GFAT"/>
    <property type="match status" value="1"/>
</dbReference>
<dbReference type="CDD" id="cd05008">
    <property type="entry name" value="SIS_GlmS_GlmD_1"/>
    <property type="match status" value="1"/>
</dbReference>
<dbReference type="CDD" id="cd05009">
    <property type="entry name" value="SIS_GlmS_GlmD_2"/>
    <property type="match status" value="1"/>
</dbReference>
<dbReference type="FunFam" id="3.40.50.10490:FF:000001">
    <property type="entry name" value="Glutamine--fructose-6-phosphate aminotransferase [isomerizing]"/>
    <property type="match status" value="1"/>
</dbReference>
<dbReference type="FunFam" id="3.40.50.10490:FF:000002">
    <property type="entry name" value="Glutamine--fructose-6-phosphate aminotransferase [isomerizing]"/>
    <property type="match status" value="1"/>
</dbReference>
<dbReference type="FunFam" id="3.60.20.10:FF:000006">
    <property type="entry name" value="Glutamine--fructose-6-phosphate aminotransferase [isomerizing]"/>
    <property type="match status" value="1"/>
</dbReference>
<dbReference type="Gene3D" id="3.40.50.10490">
    <property type="entry name" value="Glucose-6-phosphate isomerase like protein, domain 1"/>
    <property type="match status" value="2"/>
</dbReference>
<dbReference type="Gene3D" id="3.60.20.10">
    <property type="entry name" value="Glutamine Phosphoribosylpyrophosphate, subunit 1, domain 1"/>
    <property type="match status" value="1"/>
</dbReference>
<dbReference type="HAMAP" id="MF_00164">
    <property type="entry name" value="GlmS"/>
    <property type="match status" value="1"/>
</dbReference>
<dbReference type="InterPro" id="IPR017932">
    <property type="entry name" value="GATase_2_dom"/>
</dbReference>
<dbReference type="InterPro" id="IPR005855">
    <property type="entry name" value="GFAT"/>
</dbReference>
<dbReference type="InterPro" id="IPR047084">
    <property type="entry name" value="GFAT_N"/>
</dbReference>
<dbReference type="InterPro" id="IPR035466">
    <property type="entry name" value="GlmS/AgaS_SIS"/>
</dbReference>
<dbReference type="InterPro" id="IPR035490">
    <property type="entry name" value="GlmS/FrlB_SIS"/>
</dbReference>
<dbReference type="InterPro" id="IPR029055">
    <property type="entry name" value="Ntn_hydrolases_N"/>
</dbReference>
<dbReference type="InterPro" id="IPR001347">
    <property type="entry name" value="SIS_dom"/>
</dbReference>
<dbReference type="InterPro" id="IPR046348">
    <property type="entry name" value="SIS_dom_sf"/>
</dbReference>
<dbReference type="NCBIfam" id="TIGR01135">
    <property type="entry name" value="glmS"/>
    <property type="match status" value="1"/>
</dbReference>
<dbReference type="NCBIfam" id="NF001484">
    <property type="entry name" value="PRK00331.1"/>
    <property type="match status" value="1"/>
</dbReference>
<dbReference type="PANTHER" id="PTHR10937">
    <property type="entry name" value="GLUCOSAMINE--FRUCTOSE-6-PHOSPHATE AMINOTRANSFERASE, ISOMERIZING"/>
    <property type="match status" value="1"/>
</dbReference>
<dbReference type="PANTHER" id="PTHR10937:SF0">
    <property type="entry name" value="GLUTAMINE--FRUCTOSE-6-PHOSPHATE TRANSAMINASE (ISOMERIZING)"/>
    <property type="match status" value="1"/>
</dbReference>
<dbReference type="Pfam" id="PF13522">
    <property type="entry name" value="GATase_6"/>
    <property type="match status" value="1"/>
</dbReference>
<dbReference type="Pfam" id="PF01380">
    <property type="entry name" value="SIS"/>
    <property type="match status" value="2"/>
</dbReference>
<dbReference type="SUPFAM" id="SSF56235">
    <property type="entry name" value="N-terminal nucleophile aminohydrolases (Ntn hydrolases)"/>
    <property type="match status" value="1"/>
</dbReference>
<dbReference type="SUPFAM" id="SSF53697">
    <property type="entry name" value="SIS domain"/>
    <property type="match status" value="1"/>
</dbReference>
<dbReference type="PROSITE" id="PS51278">
    <property type="entry name" value="GATASE_TYPE_2"/>
    <property type="match status" value="1"/>
</dbReference>
<dbReference type="PROSITE" id="PS51464">
    <property type="entry name" value="SIS"/>
    <property type="match status" value="2"/>
</dbReference>